<name>PHOSP_EBLV2</name>
<protein>
    <recommendedName>
        <fullName>Phosphoprotein</fullName>
        <shortName>Protein P</shortName>
    </recommendedName>
    <alternativeName>
        <fullName>Protein M1</fullName>
    </alternativeName>
</protein>
<organismHost>
    <name type="scientific">Mammalia</name>
    <dbReference type="NCBI Taxonomy" id="40674"/>
</organismHost>
<feature type="chain" id="PRO_0000299096" description="Phosphoprotein">
    <location>
        <begin position="1"/>
        <end position="297"/>
    </location>
</feature>
<feature type="region of interest" description="Disordered" evidence="2">
    <location>
        <begin position="140"/>
        <end position="191"/>
    </location>
</feature>
<feature type="short sequence motif" description="Nuclear export signal" evidence="1">
    <location>
        <begin position="49"/>
        <end position="58"/>
    </location>
</feature>
<feature type="short sequence motif" description="Nuclear localization signal" evidence="1">
    <location>
        <begin position="211"/>
        <end position="214"/>
    </location>
</feature>
<feature type="compositionally biased region" description="Basic and acidic residues" evidence="2">
    <location>
        <begin position="140"/>
        <end position="154"/>
    </location>
</feature>
<feature type="compositionally biased region" description="Polar residues" evidence="2">
    <location>
        <begin position="168"/>
        <end position="179"/>
    </location>
</feature>
<feature type="modified residue" description="Phosphoserine; by host PKC" evidence="1">
    <location>
        <position position="210"/>
    </location>
</feature>
<feature type="modified residue" description="Phosphoserine; by host PKC" evidence="1">
    <location>
        <position position="271"/>
    </location>
</feature>
<feature type="splice variant" id="VSP_027558" description="In isoform P5." evidence="3">
    <location>
        <begin position="1"/>
        <end position="82"/>
    </location>
</feature>
<feature type="splice variant" id="VSP_027559" description="In isoform P3." evidence="3">
    <location>
        <begin position="1"/>
        <end position="52"/>
    </location>
</feature>
<feature type="splice variant" id="VSP_027560" description="In isoform P2." evidence="3">
    <location>
        <begin position="1"/>
        <end position="19"/>
    </location>
</feature>
<feature type="sequence variant" description="In strain: Isolate Switzerland/V286/1992.">
    <original>F</original>
    <variation>S</variation>
    <location>
        <position position="153"/>
    </location>
</feature>
<feature type="sequence variant" description="In strain: Isolate Switzerland/V286/1992.">
    <original>K</original>
    <variation>R</variation>
    <location>
        <position position="239"/>
    </location>
</feature>
<feature type="sequence variant" description="In strain: Isolate Switzerland/V286/1992.">
    <original>D</original>
    <variation>I</variation>
    <location>
        <position position="253"/>
    </location>
</feature>
<accession>A4UHQ4</accession>
<accession>O56780</accession>
<keyword id="KW-0024">Alternative initiation</keyword>
<keyword id="KW-0143">Chaperone</keyword>
<keyword id="KW-1035">Host cytoplasm</keyword>
<keyword id="KW-1048">Host nucleus</keyword>
<keyword id="KW-0945">Host-virus interaction</keyword>
<keyword id="KW-1090">Inhibition of host innate immune response by virus</keyword>
<keyword id="KW-1114">Inhibition of host interferon signaling pathway by virus</keyword>
<keyword id="KW-1105">Inhibition of host STAT1 by virus</keyword>
<keyword id="KW-1106">Inhibition of host STAT2 by virus</keyword>
<keyword id="KW-0922">Interferon antiviral system evasion</keyword>
<keyword id="KW-0597">Phosphoprotein</keyword>
<keyword id="KW-1185">Reference proteome</keyword>
<keyword id="KW-0899">Viral immunoevasion</keyword>
<keyword id="KW-0693">Viral RNA replication</keyword>
<keyword id="KW-0946">Virion</keyword>
<evidence type="ECO:0000250" key="1"/>
<evidence type="ECO:0000256" key="2">
    <source>
        <dbReference type="SAM" id="MobiDB-lite"/>
    </source>
</evidence>
<evidence type="ECO:0000305" key="3"/>
<proteinExistence type="evidence at transcript level"/>
<organism>
    <name type="scientific">European bat lyssavirus 2 (strain Human/Scotland/RV1333/2002)</name>
    <name type="common">EBLV2</name>
    <dbReference type="NCBI Taxonomy" id="453116"/>
    <lineage>
        <taxon>Viruses</taxon>
        <taxon>Riboviria</taxon>
        <taxon>Orthornavirae</taxon>
        <taxon>Negarnaviricota</taxon>
        <taxon>Haploviricotina</taxon>
        <taxon>Monjiviricetes</taxon>
        <taxon>Mononegavirales</taxon>
        <taxon>Rhabdoviridae</taxon>
        <taxon>Alpharhabdovirinae</taxon>
        <taxon>Lyssavirus</taxon>
        <taxon>Lyssavirus hamburg</taxon>
    </lineage>
</organism>
<gene>
    <name type="primary">P</name>
</gene>
<sequence>MSKIFVNPSAIRAGLADLEMAEETVDLVNKNIEDNQAHLQGEPIEVDALPEDMSKLQISERRPAQFTDNTGGKEEGSDEDFYMAESEDPYIPLQSYLEGVGIQLVRQMKTGERFFKIWSQAVEEIISYVTVHFPMPLGKSTEDKSTQTPEEKFKPSPQQAVTKKESQSSKIKTISQESSGPPALEWSTTNDEENASVEAEIAHQIAESFSKKYKFPSRSSGIFLFNFEQLKMNLDDIVKEAKKIPGVVRLAQDGFRLPLRCILGGVGSVNSKKFQLLVNSDKLGKIMQDDLNRYLAY</sequence>
<comment type="function">
    <text evidence="1">Non catalytic polymerase cofactor and regulatory protein that plays a role in viral transcription and replication. Stabilizes the RNA polymerase L to the N-RNA template and binds the soluble protein N, preventing it from encapsidating non-genomic RNA. Also inhibits host IFN-alpha and IFN-beta signaling by binding and retaining phosphorylated STAT1 in the cytoplasm or by inhibiting the DNA binding of STAT1 in the nucleus (By similarity).</text>
</comment>
<comment type="subunit">
    <text evidence="3">Homotrimer when phosphorylated. This trimer is stabilized by binding to the L protein. Binds soluble protein N, and ribonucleocapsid. Interacts with host STAT1, STAT2, DYNLL1, DYNLL2 and PML.</text>
</comment>
<comment type="subunit">
    <molecule>Isoform P3</molecule>
    <text evidence="1">Binds host PML (By similarity).</text>
</comment>
<comment type="subcellular location">
    <molecule>Phosphoprotein</molecule>
    <subcellularLocation>
        <location>Virion</location>
    </subcellularLocation>
    <subcellularLocation>
        <location evidence="1">Host cytoplasm</location>
    </subcellularLocation>
</comment>
<comment type="subcellular location">
    <molecule>Isoform P2</molecule>
    <subcellularLocation>
        <location evidence="1">Host cytoplasm</location>
    </subcellularLocation>
</comment>
<comment type="subcellular location">
    <molecule>Isoform P3</molecule>
    <subcellularLocation>
        <location evidence="1">Host nucleus</location>
    </subcellularLocation>
</comment>
<comment type="subcellular location">
    <molecule>Isoform P5</molecule>
    <subcellularLocation>
        <location evidence="1">Host nucleus</location>
    </subcellularLocation>
</comment>
<comment type="alternative products">
    <event type="alternative initiation"/>
    <isoform>
        <id>A4UHQ4-1</id>
        <name>P</name>
        <sequence type="displayed"/>
    </isoform>
    <isoform>
        <id>A4UHQ4-2</id>
        <name>P2</name>
        <sequence type="described" ref="VSP_027560"/>
    </isoform>
    <isoform>
        <id>A4UHQ4-3</id>
        <name>P3</name>
        <sequence type="described" ref="VSP_027559"/>
    </isoform>
    <isoform>
        <id>A4UHQ4-4</id>
        <name>P5</name>
        <sequence type="described" ref="VSP_027558"/>
    </isoform>
</comment>
<comment type="PTM">
    <text evidence="1">Phosphorylated by host PKC and by an unknown kinase.</text>
</comment>
<comment type="similarity">
    <text evidence="3">Belongs to the lyssavirus protein P family.</text>
</comment>
<reference key="1">
    <citation type="journal article" date="2002" name="Virology">
        <title>Lyssavirus P gene characterisation provides insights into the phylogeny of the genus and identifies structural similarities and diversity within the encoded phosphoprotein.</title>
        <authorList>
            <person name="Nadin-Davis S.A."/>
            <person name="Abdel-Malik M."/>
            <person name="Armstrong J."/>
            <person name="Wandeler A.I."/>
        </authorList>
    </citation>
    <scope>NUCLEOTIDE SEQUENCE [MRNA]</scope>
    <source>
        <strain>Isolate Switzerland/V286/1992</strain>
    </source>
</reference>
<reference key="2">
    <citation type="journal article" date="2007" name="J. Gen. Virol.">
        <title>Comparative analysis of the full genome sequence of European bat lyssavirus type 1 and type 2 with other lyssaviruses and evidence for a conserved transcription termination and polyadenylation motif in the G-L 3' non-translated region.</title>
        <authorList>
            <person name="Marston D.A."/>
            <person name="McElhinney L.M."/>
            <person name="Johnson N."/>
            <person name="Muller T."/>
            <person name="Conzelmann K.K."/>
            <person name="Tordo N."/>
            <person name="Fooks A.R."/>
        </authorList>
    </citation>
    <scope>NUCLEOTIDE SEQUENCE [GENOMIC RNA]</scope>
</reference>
<reference key="3">
    <citation type="submission" date="2015-02" db="EMBL/GenBank/DDBJ databases">
        <authorList>
            <person name="Marston D.A."/>
            <person name="McElhinney L.M."/>
            <person name="Johnson N."/>
            <person name="Mueller T."/>
            <person name="Conzelmann K.K."/>
            <person name="Tordo N."/>
            <person name="Fooks A.R."/>
        </authorList>
    </citation>
    <scope>SEQUENCE REVISION</scope>
</reference>
<dbReference type="EMBL" id="AF049121">
    <property type="protein sequence ID" value="AAC04591.1"/>
    <property type="molecule type" value="mRNA"/>
</dbReference>
<dbReference type="EMBL" id="EF157977">
    <property type="protein sequence ID" value="ABO65249.2"/>
    <property type="molecule type" value="Genomic_RNA"/>
</dbReference>
<dbReference type="RefSeq" id="YP_001285394.2">
    <property type="nucleotide sequence ID" value="NC_009528.2"/>
</dbReference>
<dbReference type="SMR" id="A4UHQ4"/>
<dbReference type="GeneID" id="5219914"/>
<dbReference type="KEGG" id="vg:5219914"/>
<dbReference type="Proteomes" id="UP000007206">
    <property type="component" value="Segment"/>
</dbReference>
<dbReference type="GO" id="GO:0030430">
    <property type="term" value="C:host cell cytoplasm"/>
    <property type="evidence" value="ECO:0007669"/>
    <property type="project" value="UniProtKB-SubCell"/>
</dbReference>
<dbReference type="GO" id="GO:0042025">
    <property type="term" value="C:host cell nucleus"/>
    <property type="evidence" value="ECO:0007669"/>
    <property type="project" value="UniProtKB-SubCell"/>
</dbReference>
<dbReference type="GO" id="GO:0044423">
    <property type="term" value="C:virion component"/>
    <property type="evidence" value="ECO:0007669"/>
    <property type="project" value="UniProtKB-KW"/>
</dbReference>
<dbReference type="GO" id="GO:0003968">
    <property type="term" value="F:RNA-directed RNA polymerase activity"/>
    <property type="evidence" value="ECO:0007669"/>
    <property type="project" value="InterPro"/>
</dbReference>
<dbReference type="GO" id="GO:0052170">
    <property type="term" value="P:symbiont-mediated suppression of host innate immune response"/>
    <property type="evidence" value="ECO:0007669"/>
    <property type="project" value="UniProtKB-KW"/>
</dbReference>
<dbReference type="GO" id="GO:0039563">
    <property type="term" value="P:symbiont-mediated suppression of host JAK-STAT cascade via inhibition of STAT1 activity"/>
    <property type="evidence" value="ECO:0007669"/>
    <property type="project" value="UniProtKB-KW"/>
</dbReference>
<dbReference type="GO" id="GO:0039564">
    <property type="term" value="P:symbiont-mediated suppression of host JAK-STAT cascade via inhibition of STAT2 activity"/>
    <property type="evidence" value="ECO:0007669"/>
    <property type="project" value="UniProtKB-KW"/>
</dbReference>
<dbReference type="GO" id="GO:0039502">
    <property type="term" value="P:symbiont-mediated suppression of host type I interferon-mediated signaling pathway"/>
    <property type="evidence" value="ECO:0007669"/>
    <property type="project" value="UniProtKB-KW"/>
</dbReference>
<dbReference type="GO" id="GO:0019083">
    <property type="term" value="P:viral transcription"/>
    <property type="evidence" value="ECO:0007669"/>
    <property type="project" value="InterPro"/>
</dbReference>
<dbReference type="CDD" id="cd21032">
    <property type="entry name" value="RABV_P-protein-C_like"/>
    <property type="match status" value="1"/>
</dbReference>
<dbReference type="Gene3D" id="6.10.140.1560">
    <property type="match status" value="1"/>
</dbReference>
<dbReference type="Gene3D" id="1.20.120.820">
    <property type="entry name" value="Phosphoprotein, C-terminal domain"/>
    <property type="match status" value="1"/>
</dbReference>
<dbReference type="InterPro" id="IPR004259">
    <property type="entry name" value="PP_M1-like"/>
</dbReference>
<dbReference type="InterPro" id="IPR037199">
    <property type="entry name" value="PP_M1_C"/>
</dbReference>
<dbReference type="InterPro" id="IPR049506">
    <property type="entry name" value="RABV_P-like_C"/>
</dbReference>
<dbReference type="Pfam" id="PF03012">
    <property type="entry name" value="PP_M1"/>
    <property type="match status" value="1"/>
</dbReference>
<dbReference type="SUPFAM" id="SSF118173">
    <property type="entry name" value="Phosphoprotein M1, C-terminal domain"/>
    <property type="match status" value="1"/>
</dbReference>